<gene>
    <name type="ordered locus">MT1352</name>
</gene>
<sequence length="147" mass="16594">MSAPMIGMVVLVVVLGLAVLALSYRLWKLRQGGTAGIMRDIPAVGGHGWRHGVIRYRGGEAAFYRLSSLRLWPDRRLSRRGVEIISRRAPRGDEFDIMTDEIVVVELCDSTQDRRVGYEIALDRGALTAFLSWLESRPSPRARRRSM</sequence>
<organism>
    <name type="scientific">Mycobacterium tuberculosis (strain CDC 1551 / Oshkosh)</name>
    <dbReference type="NCBI Taxonomy" id="83331"/>
    <lineage>
        <taxon>Bacteria</taxon>
        <taxon>Bacillati</taxon>
        <taxon>Actinomycetota</taxon>
        <taxon>Actinomycetes</taxon>
        <taxon>Mycobacteriales</taxon>
        <taxon>Mycobacteriaceae</taxon>
        <taxon>Mycobacterium</taxon>
        <taxon>Mycobacterium tuberculosis complex</taxon>
    </lineage>
</organism>
<feature type="chain" id="PRO_0000427376" description="Uncharacterized protein MT1352">
    <location>
        <begin position="1"/>
        <end position="147"/>
    </location>
</feature>
<feature type="transmembrane region" description="Helical" evidence="1">
    <location>
        <begin position="3"/>
        <end position="23"/>
    </location>
</feature>
<accession>P9WM28</accession>
<accession>L0T909</accession>
<accession>Q10620</accession>
<evidence type="ECO:0000255" key="1"/>
<evidence type="ECO:0000305" key="2"/>
<keyword id="KW-0472">Membrane</keyword>
<keyword id="KW-1185">Reference proteome</keyword>
<keyword id="KW-0812">Transmembrane</keyword>
<keyword id="KW-1133">Transmembrane helix</keyword>
<comment type="subcellular location">
    <subcellularLocation>
        <location evidence="2">Membrane</location>
        <topology evidence="2">Single-pass membrane protein</topology>
    </subcellularLocation>
</comment>
<comment type="similarity">
    <text evidence="2">To M.leprae ML1147.</text>
</comment>
<dbReference type="EMBL" id="AE000516">
    <property type="protein sequence ID" value="AAK45614.1"/>
    <property type="molecule type" value="Genomic_DNA"/>
</dbReference>
<dbReference type="PIR" id="D70775">
    <property type="entry name" value="D70775"/>
</dbReference>
<dbReference type="RefSeq" id="WP_003406722.1">
    <property type="nucleotide sequence ID" value="NZ_KK341227.1"/>
</dbReference>
<dbReference type="SMR" id="P9WM28"/>
<dbReference type="KEGG" id="mtc:MT1352"/>
<dbReference type="PATRIC" id="fig|83331.31.peg.1458"/>
<dbReference type="HOGENOM" id="CLU_122300_0_1_11"/>
<dbReference type="Proteomes" id="UP000001020">
    <property type="component" value="Chromosome"/>
</dbReference>
<dbReference type="GO" id="GO:0016020">
    <property type="term" value="C:membrane"/>
    <property type="evidence" value="ECO:0007669"/>
    <property type="project" value="UniProtKB-SubCell"/>
</dbReference>
<dbReference type="InterPro" id="IPR019675">
    <property type="entry name" value="DUF2550"/>
</dbReference>
<dbReference type="Pfam" id="PF10739">
    <property type="entry name" value="DUF2550"/>
    <property type="match status" value="1"/>
</dbReference>
<reference key="1">
    <citation type="journal article" date="2002" name="J. Bacteriol.">
        <title>Whole-genome comparison of Mycobacterium tuberculosis clinical and laboratory strains.</title>
        <authorList>
            <person name="Fleischmann R.D."/>
            <person name="Alland D."/>
            <person name="Eisen J.A."/>
            <person name="Carpenter L."/>
            <person name="White O."/>
            <person name="Peterson J.D."/>
            <person name="DeBoy R.T."/>
            <person name="Dodson R.J."/>
            <person name="Gwinn M.L."/>
            <person name="Haft D.H."/>
            <person name="Hickey E.K."/>
            <person name="Kolonay J.F."/>
            <person name="Nelson W.C."/>
            <person name="Umayam L.A."/>
            <person name="Ermolaeva M.D."/>
            <person name="Salzberg S.L."/>
            <person name="Delcher A."/>
            <person name="Utterback T.R."/>
            <person name="Weidman J.F."/>
            <person name="Khouri H.M."/>
            <person name="Gill J."/>
            <person name="Mikula A."/>
            <person name="Bishai W."/>
            <person name="Jacobs W.R. Jr."/>
            <person name="Venter J.C."/>
            <person name="Fraser C.M."/>
        </authorList>
    </citation>
    <scope>NUCLEOTIDE SEQUENCE [LARGE SCALE GENOMIC DNA]</scope>
    <source>
        <strain>CDC 1551 / Oshkosh</strain>
    </source>
</reference>
<name>Y1312_MYCTO</name>
<protein>
    <recommendedName>
        <fullName>Uncharacterized protein MT1352</fullName>
    </recommendedName>
</protein>
<proteinExistence type="predicted"/>